<organism>
    <name type="scientific">Homo sapiens</name>
    <name type="common">Human</name>
    <dbReference type="NCBI Taxonomy" id="9606"/>
    <lineage>
        <taxon>Eukaryota</taxon>
        <taxon>Metazoa</taxon>
        <taxon>Chordata</taxon>
        <taxon>Craniata</taxon>
        <taxon>Vertebrata</taxon>
        <taxon>Euteleostomi</taxon>
        <taxon>Mammalia</taxon>
        <taxon>Eutheria</taxon>
        <taxon>Euarchontoglires</taxon>
        <taxon>Primates</taxon>
        <taxon>Haplorrhini</taxon>
        <taxon>Catarrhini</taxon>
        <taxon>Hominidae</taxon>
        <taxon>Homo</taxon>
    </lineage>
</organism>
<keyword id="KW-0131">Cell cycle</keyword>
<keyword id="KW-0132">Cell division</keyword>
<keyword id="KW-0963">Cytoplasm</keyword>
<keyword id="KW-0498">Mitosis</keyword>
<keyword id="KW-0597">Phosphoprotein</keyword>
<keyword id="KW-1267">Proteomics identification</keyword>
<keyword id="KW-1185">Reference proteome</keyword>
<keyword id="KW-0677">Repeat</keyword>
<keyword id="KW-0853">WD repeat</keyword>
<sequence length="453" mass="52042">MAGAGGGGCPAGGNDFQWCFSQVKGAIDEDVAEADIISTVEFNYSGDLLATGDKGGRVVIFQREQENKSRPHSRGEYNVYSTFQSHEPEFDYLKSLEIEEKINKIRWLPQQNAAHFLLSTNDKTIKLWKISERDKRAEGYNLKDEDGRLRDPFRITALRVPILKPMDLMVEASPRRIFANAHTYHINSISVNSDHETYLSADDLRINLWHLEITDRSFNIVDIKPANMEELTEVITAAEFHPHQCNVFVYSSSKGTIRLCDMRSSALCDRHSKFFEEPEDPSSRSFFSEIISSISDVKFSHSGRYMMTRDYLSVKVWDLNMESRPVETHQVHEYLRSKLCSLYENDCIFDKFECCWNGSDSAIMTGSYNNFFRMFDRDTRRDVTLEASRESSKPRASLKPRKVCTGGKRRKDEISVDSLDFNKKILHTAWHPVDNVIAVAATNNLYIFQDKIN</sequence>
<reference key="1">
    <citation type="journal article" date="2004" name="Nat. Genet.">
        <title>Complete sequencing and characterization of 21,243 full-length human cDNAs.</title>
        <authorList>
            <person name="Ota T."/>
            <person name="Suzuki Y."/>
            <person name="Nishikawa T."/>
            <person name="Otsuki T."/>
            <person name="Sugiyama T."/>
            <person name="Irie R."/>
            <person name="Wakamatsu A."/>
            <person name="Hayashi K."/>
            <person name="Sato H."/>
            <person name="Nagai K."/>
            <person name="Kimura K."/>
            <person name="Makita H."/>
            <person name="Sekine M."/>
            <person name="Obayashi M."/>
            <person name="Nishi T."/>
            <person name="Shibahara T."/>
            <person name="Tanaka T."/>
            <person name="Ishii S."/>
            <person name="Yamamoto J."/>
            <person name="Saito K."/>
            <person name="Kawai Y."/>
            <person name="Isono Y."/>
            <person name="Nakamura Y."/>
            <person name="Nagahari K."/>
            <person name="Murakami K."/>
            <person name="Yasuda T."/>
            <person name="Iwayanagi T."/>
            <person name="Wagatsuma M."/>
            <person name="Shiratori A."/>
            <person name="Sudo H."/>
            <person name="Hosoiri T."/>
            <person name="Kaku Y."/>
            <person name="Kodaira H."/>
            <person name="Kondo H."/>
            <person name="Sugawara M."/>
            <person name="Takahashi M."/>
            <person name="Kanda K."/>
            <person name="Yokoi T."/>
            <person name="Furuya T."/>
            <person name="Kikkawa E."/>
            <person name="Omura Y."/>
            <person name="Abe K."/>
            <person name="Kamihara K."/>
            <person name="Katsuta N."/>
            <person name="Sato K."/>
            <person name="Tanikawa M."/>
            <person name="Yamazaki M."/>
            <person name="Ninomiya K."/>
            <person name="Ishibashi T."/>
            <person name="Yamashita H."/>
            <person name="Murakawa K."/>
            <person name="Fujimori K."/>
            <person name="Tanai H."/>
            <person name="Kimata M."/>
            <person name="Watanabe M."/>
            <person name="Hiraoka S."/>
            <person name="Chiba Y."/>
            <person name="Ishida S."/>
            <person name="Ono Y."/>
            <person name="Takiguchi S."/>
            <person name="Watanabe S."/>
            <person name="Yosida M."/>
            <person name="Hotuta T."/>
            <person name="Kusano J."/>
            <person name="Kanehori K."/>
            <person name="Takahashi-Fujii A."/>
            <person name="Hara H."/>
            <person name="Tanase T.-O."/>
            <person name="Nomura Y."/>
            <person name="Togiya S."/>
            <person name="Komai F."/>
            <person name="Hara R."/>
            <person name="Takeuchi K."/>
            <person name="Arita M."/>
            <person name="Imose N."/>
            <person name="Musashino K."/>
            <person name="Yuuki H."/>
            <person name="Oshima A."/>
            <person name="Sasaki N."/>
            <person name="Aotsuka S."/>
            <person name="Yoshikawa Y."/>
            <person name="Matsunawa H."/>
            <person name="Ichihara T."/>
            <person name="Shiohata N."/>
            <person name="Sano S."/>
            <person name="Moriya S."/>
            <person name="Momiyama H."/>
            <person name="Satoh N."/>
            <person name="Takami S."/>
            <person name="Terashima Y."/>
            <person name="Suzuki O."/>
            <person name="Nakagawa S."/>
            <person name="Senoh A."/>
            <person name="Mizoguchi H."/>
            <person name="Goto Y."/>
            <person name="Shimizu F."/>
            <person name="Wakebe H."/>
            <person name="Hishigaki H."/>
            <person name="Watanabe T."/>
            <person name="Sugiyama A."/>
            <person name="Takemoto M."/>
            <person name="Kawakami B."/>
            <person name="Yamazaki M."/>
            <person name="Watanabe K."/>
            <person name="Kumagai A."/>
            <person name="Itakura S."/>
            <person name="Fukuzumi Y."/>
            <person name="Fujimori Y."/>
            <person name="Komiyama M."/>
            <person name="Tashiro H."/>
            <person name="Tanigami A."/>
            <person name="Fujiwara T."/>
            <person name="Ono T."/>
            <person name="Yamada K."/>
            <person name="Fujii Y."/>
            <person name="Ozaki K."/>
            <person name="Hirao M."/>
            <person name="Ohmori Y."/>
            <person name="Kawabata A."/>
            <person name="Hikiji T."/>
            <person name="Kobatake N."/>
            <person name="Inagaki H."/>
            <person name="Ikema Y."/>
            <person name="Okamoto S."/>
            <person name="Okitani R."/>
            <person name="Kawakami T."/>
            <person name="Noguchi S."/>
            <person name="Itoh T."/>
            <person name="Shigeta K."/>
            <person name="Senba T."/>
            <person name="Matsumura K."/>
            <person name="Nakajima Y."/>
            <person name="Mizuno T."/>
            <person name="Morinaga M."/>
            <person name="Sasaki M."/>
            <person name="Togashi T."/>
            <person name="Oyama M."/>
            <person name="Hata H."/>
            <person name="Watanabe M."/>
            <person name="Komatsu T."/>
            <person name="Mizushima-Sugano J."/>
            <person name="Satoh T."/>
            <person name="Shirai Y."/>
            <person name="Takahashi Y."/>
            <person name="Nakagawa K."/>
            <person name="Okumura K."/>
            <person name="Nagase T."/>
            <person name="Nomura N."/>
            <person name="Kikuchi H."/>
            <person name="Masuho Y."/>
            <person name="Yamashita R."/>
            <person name="Nakai K."/>
            <person name="Yada T."/>
            <person name="Nakamura Y."/>
            <person name="Ohara O."/>
            <person name="Isogai T."/>
            <person name="Sugano S."/>
        </authorList>
    </citation>
    <scope>NUCLEOTIDE SEQUENCE [LARGE SCALE MRNA]</scope>
    <source>
        <tissue>Uterus</tissue>
    </source>
</reference>
<reference key="2">
    <citation type="journal article" date="2004" name="Nature">
        <title>The DNA sequence and comparative analysis of human chromosome 10.</title>
        <authorList>
            <person name="Deloukas P."/>
            <person name="Earthrowl M.E."/>
            <person name="Grafham D.V."/>
            <person name="Rubenfield M."/>
            <person name="French L."/>
            <person name="Steward C.A."/>
            <person name="Sims S.K."/>
            <person name="Jones M.C."/>
            <person name="Searle S."/>
            <person name="Scott C."/>
            <person name="Howe K."/>
            <person name="Hunt S.E."/>
            <person name="Andrews T.D."/>
            <person name="Gilbert J.G.R."/>
            <person name="Swarbreck D."/>
            <person name="Ashurst J.L."/>
            <person name="Taylor A."/>
            <person name="Battles J."/>
            <person name="Bird C.P."/>
            <person name="Ainscough R."/>
            <person name="Almeida J.P."/>
            <person name="Ashwell R.I.S."/>
            <person name="Ambrose K.D."/>
            <person name="Babbage A.K."/>
            <person name="Bagguley C.L."/>
            <person name="Bailey J."/>
            <person name="Banerjee R."/>
            <person name="Bates K."/>
            <person name="Beasley H."/>
            <person name="Bray-Allen S."/>
            <person name="Brown A.J."/>
            <person name="Brown J.Y."/>
            <person name="Burford D.C."/>
            <person name="Burrill W."/>
            <person name="Burton J."/>
            <person name="Cahill P."/>
            <person name="Camire D."/>
            <person name="Carter N.P."/>
            <person name="Chapman J.C."/>
            <person name="Clark S.Y."/>
            <person name="Clarke G."/>
            <person name="Clee C.M."/>
            <person name="Clegg S."/>
            <person name="Corby N."/>
            <person name="Coulson A."/>
            <person name="Dhami P."/>
            <person name="Dutta I."/>
            <person name="Dunn M."/>
            <person name="Faulkner L."/>
            <person name="Frankish A."/>
            <person name="Frankland J.A."/>
            <person name="Garner P."/>
            <person name="Garnett J."/>
            <person name="Gribble S."/>
            <person name="Griffiths C."/>
            <person name="Grocock R."/>
            <person name="Gustafson E."/>
            <person name="Hammond S."/>
            <person name="Harley J.L."/>
            <person name="Hart E."/>
            <person name="Heath P.D."/>
            <person name="Ho T.P."/>
            <person name="Hopkins B."/>
            <person name="Horne J."/>
            <person name="Howden P.J."/>
            <person name="Huckle E."/>
            <person name="Hynds C."/>
            <person name="Johnson C."/>
            <person name="Johnson D."/>
            <person name="Kana A."/>
            <person name="Kay M."/>
            <person name="Kimberley A.M."/>
            <person name="Kershaw J.K."/>
            <person name="Kokkinaki M."/>
            <person name="Laird G.K."/>
            <person name="Lawlor S."/>
            <person name="Lee H.M."/>
            <person name="Leongamornlert D.A."/>
            <person name="Laird G."/>
            <person name="Lloyd C."/>
            <person name="Lloyd D.M."/>
            <person name="Loveland J."/>
            <person name="Lovell J."/>
            <person name="McLaren S."/>
            <person name="McLay K.E."/>
            <person name="McMurray A."/>
            <person name="Mashreghi-Mohammadi M."/>
            <person name="Matthews L."/>
            <person name="Milne S."/>
            <person name="Nickerson T."/>
            <person name="Nguyen M."/>
            <person name="Overton-Larty E."/>
            <person name="Palmer S.A."/>
            <person name="Pearce A.V."/>
            <person name="Peck A.I."/>
            <person name="Pelan S."/>
            <person name="Phillimore B."/>
            <person name="Porter K."/>
            <person name="Rice C.M."/>
            <person name="Rogosin A."/>
            <person name="Ross M.T."/>
            <person name="Sarafidou T."/>
            <person name="Sehra H.K."/>
            <person name="Shownkeen R."/>
            <person name="Skuce C.D."/>
            <person name="Smith M."/>
            <person name="Standring L."/>
            <person name="Sycamore N."/>
            <person name="Tester J."/>
            <person name="Thorpe A."/>
            <person name="Torcasso W."/>
            <person name="Tracey A."/>
            <person name="Tromans A."/>
            <person name="Tsolas J."/>
            <person name="Wall M."/>
            <person name="Walsh J."/>
            <person name="Wang H."/>
            <person name="Weinstock K."/>
            <person name="West A.P."/>
            <person name="Willey D.L."/>
            <person name="Whitehead S.L."/>
            <person name="Wilming L."/>
            <person name="Wray P.W."/>
            <person name="Young L."/>
            <person name="Chen Y."/>
            <person name="Lovering R.C."/>
            <person name="Moschonas N.K."/>
            <person name="Siebert R."/>
            <person name="Fechtel K."/>
            <person name="Bentley D."/>
            <person name="Durbin R.M."/>
            <person name="Hubbard T."/>
            <person name="Doucette-Stamm L."/>
            <person name="Beck S."/>
            <person name="Smith D.R."/>
            <person name="Rogers J."/>
        </authorList>
    </citation>
    <scope>NUCLEOTIDE SEQUENCE [LARGE SCALE GENOMIC DNA]</scope>
</reference>
<reference key="3">
    <citation type="journal article" date="2004" name="Genome Res.">
        <title>The status, quality, and expansion of the NIH full-length cDNA project: the Mammalian Gene Collection (MGC).</title>
        <authorList>
            <consortium name="The MGC Project Team"/>
        </authorList>
    </citation>
    <scope>NUCLEOTIDE SEQUENCE [LARGE SCALE MRNA]</scope>
    <source>
        <tissue>Testis</tissue>
    </source>
</reference>
<reference key="4">
    <citation type="journal article" date="2000" name="DNA Res.">
        <title>Prediction of the coding sequences of unidentified human genes. XVII. The complete sequences of 100 new cDNA clones from brain which code for large proteins in vitro.</title>
        <authorList>
            <person name="Nagase T."/>
            <person name="Kikuno R."/>
            <person name="Ishikawa K."/>
            <person name="Hirosawa M."/>
            <person name="Ohara O."/>
        </authorList>
    </citation>
    <scope>NUCLEOTIDE SEQUENCE [LARGE SCALE MRNA] OF 34-453</scope>
    <source>
        <tissue>Brain</tissue>
    </source>
</reference>
<reference key="5">
    <citation type="journal article" date="2015" name="FEBS Lett.">
        <title>HSF1 transcriptional activity is modulated by IER5 and PP2A/B55.</title>
        <authorList>
            <person name="Ishikawa Y."/>
            <person name="Kawabata S."/>
            <person name="Sakurai H."/>
        </authorList>
    </citation>
    <scope>INTERACTION WITH IER5</scope>
</reference>
<evidence type="ECO:0000250" key="1"/>
<evidence type="ECO:0000250" key="2">
    <source>
        <dbReference type="UniProtKB" id="P36877"/>
    </source>
</evidence>
<evidence type="ECO:0000250" key="3">
    <source>
        <dbReference type="UniProtKB" id="P56932"/>
    </source>
</evidence>
<evidence type="ECO:0000250" key="4">
    <source>
        <dbReference type="UniProtKB" id="Q7ZX64"/>
    </source>
</evidence>
<evidence type="ECO:0000250" key="5">
    <source>
        <dbReference type="UniProtKB" id="Q925E7"/>
    </source>
</evidence>
<evidence type="ECO:0000269" key="6">
    <source>
    </source>
</evidence>
<evidence type="ECO:0000305" key="7"/>
<proteinExistence type="evidence at protein level"/>
<feature type="chain" id="PRO_0000071433" description="Serine/threonine-protein phosphatase 2A 55 kDa regulatory subunit B delta isoform">
    <location>
        <begin position="1"/>
        <end position="453"/>
    </location>
</feature>
<feature type="repeat" description="WD 1">
    <location>
        <begin position="32"/>
        <end position="71"/>
    </location>
</feature>
<feature type="repeat" description="WD 2">
    <location>
        <begin position="97"/>
        <end position="138"/>
    </location>
</feature>
<feature type="repeat" description="WD 3">
    <location>
        <begin position="181"/>
        <end position="219"/>
    </location>
</feature>
<feature type="repeat" description="WD 4">
    <location>
        <begin position="230"/>
        <end position="270"/>
    </location>
</feature>
<feature type="repeat" description="WD 5">
    <location>
        <begin position="289"/>
        <end position="327"/>
    </location>
</feature>
<feature type="repeat" description="WD 6">
    <location>
        <begin position="344"/>
        <end position="385"/>
    </location>
</feature>
<feature type="repeat" description="WD 7">
    <location>
        <begin position="420"/>
        <end position="452"/>
    </location>
</feature>
<feature type="modified residue" description="Phosphoserine" evidence="2">
    <location>
        <position position="285"/>
    </location>
</feature>
<feature type="modified residue" description="Phosphotyrosine" evidence="2">
    <location>
        <position position="305"/>
    </location>
</feature>
<feature type="modified residue" description="Phosphothreonine" evidence="2">
    <location>
        <position position="308"/>
    </location>
</feature>
<feature type="sequence variant" id="VAR_057127" description="In dbSNP:rs34473884.">
    <original>G</original>
    <variation>S</variation>
    <location>
        <position position="358"/>
    </location>
</feature>
<feature type="sequence conflict" description="In Ref. 1; BAF85754." evidence="7" ref="1">
    <original>I</original>
    <variation>V</variation>
    <location>
        <position position="290"/>
    </location>
</feature>
<feature type="sequence conflict" description="In Ref. 1; BAF85754." evidence="7" ref="1">
    <original>Y</original>
    <variation>H</variation>
    <location>
        <position position="311"/>
    </location>
</feature>
<feature type="sequence conflict" description="In Ref. 1; BAF85754." evidence="7" ref="1">
    <original>M</original>
    <variation>T</variation>
    <location>
        <position position="321"/>
    </location>
</feature>
<feature type="sequence conflict" description="In Ref. 1; BAF85754." evidence="7" ref="1">
    <original>Q</original>
    <variation>R</variation>
    <location>
        <position position="449"/>
    </location>
</feature>
<gene>
    <name type="primary">PPP2R2D</name>
    <name type="synonym">KIAA1541</name>
</gene>
<dbReference type="EMBL" id="AK293065">
    <property type="protein sequence ID" value="BAF85754.1"/>
    <property type="molecule type" value="mRNA"/>
</dbReference>
<dbReference type="EMBL" id="AL732395">
    <property type="status" value="NOT_ANNOTATED_CDS"/>
    <property type="molecule type" value="Genomic_DNA"/>
</dbReference>
<dbReference type="EMBL" id="BC047379">
    <property type="protein sequence ID" value="AAH47379.1"/>
    <property type="molecule type" value="mRNA"/>
</dbReference>
<dbReference type="EMBL" id="AB040974">
    <property type="protein sequence ID" value="BAA96065.1"/>
    <property type="status" value="ALT_INIT"/>
    <property type="molecule type" value="mRNA"/>
</dbReference>
<dbReference type="CCDS" id="CCDS73224.1"/>
<dbReference type="RefSeq" id="NP_001278239.1">
    <property type="nucleotide sequence ID" value="NM_001291310.1"/>
</dbReference>
<dbReference type="RefSeq" id="NP_060931.2">
    <property type="nucleotide sequence ID" value="NM_018461.4"/>
</dbReference>
<dbReference type="SMR" id="Q66LE6"/>
<dbReference type="BioGRID" id="120946">
    <property type="interactions" value="173"/>
</dbReference>
<dbReference type="FunCoup" id="Q66LE6">
    <property type="interactions" value="2167"/>
</dbReference>
<dbReference type="IntAct" id="Q66LE6">
    <property type="interactions" value="135"/>
</dbReference>
<dbReference type="MINT" id="Q66LE6"/>
<dbReference type="STRING" id="9606.ENSP00000399970"/>
<dbReference type="iPTMnet" id="Q66LE6"/>
<dbReference type="PhosphoSitePlus" id="Q66LE6"/>
<dbReference type="BioMuta" id="PPP2R2D"/>
<dbReference type="DMDM" id="74736328"/>
<dbReference type="jPOST" id="Q66LE6"/>
<dbReference type="MassIVE" id="Q66LE6"/>
<dbReference type="PaxDb" id="9606-ENSP00000399970"/>
<dbReference type="PeptideAtlas" id="Q66LE6"/>
<dbReference type="PRIDE" id="Q66LE6"/>
<dbReference type="ProteomicsDB" id="65964"/>
<dbReference type="Pumba" id="Q66LE6"/>
<dbReference type="Antibodypedia" id="55293">
    <property type="antibodies" value="56 antibodies from 14 providers"/>
</dbReference>
<dbReference type="DNASU" id="55844"/>
<dbReference type="Ensembl" id="ENST00000455566.6">
    <property type="protein sequence ID" value="ENSP00000399970.2"/>
    <property type="gene ID" value="ENSG00000175470.20"/>
</dbReference>
<dbReference type="GeneID" id="55844"/>
<dbReference type="KEGG" id="hsa:55844"/>
<dbReference type="MANE-Select" id="ENST00000455566.6">
    <property type="protein sequence ID" value="ENSP00000399970.2"/>
    <property type="RefSeq nucleotide sequence ID" value="NM_018461.5"/>
    <property type="RefSeq protein sequence ID" value="NP_060931.2"/>
</dbReference>
<dbReference type="UCSC" id="uc031wxk.2">
    <property type="organism name" value="human"/>
</dbReference>
<dbReference type="AGR" id="HGNC:23732"/>
<dbReference type="CTD" id="55844"/>
<dbReference type="DisGeNET" id="55844"/>
<dbReference type="GeneCards" id="PPP2R2D"/>
<dbReference type="HGNC" id="HGNC:23732">
    <property type="gene designation" value="PPP2R2D"/>
</dbReference>
<dbReference type="HPA" id="ENSG00000175470">
    <property type="expression patterns" value="Tissue enhanced (pancreas)"/>
</dbReference>
<dbReference type="MIM" id="613992">
    <property type="type" value="gene"/>
</dbReference>
<dbReference type="neXtProt" id="NX_Q66LE6"/>
<dbReference type="OpenTargets" id="ENSG00000175470"/>
<dbReference type="PharmGKB" id="PA134899040"/>
<dbReference type="VEuPathDB" id="HostDB:ENSG00000175470"/>
<dbReference type="eggNOG" id="KOG1354">
    <property type="taxonomic scope" value="Eukaryota"/>
</dbReference>
<dbReference type="GeneTree" id="ENSGT00950000182864"/>
<dbReference type="HOGENOM" id="CLU_021713_3_3_1"/>
<dbReference type="InParanoid" id="Q66LE6"/>
<dbReference type="OMA" id="LSHHDTI"/>
<dbReference type="OrthoDB" id="6274823at2759"/>
<dbReference type="PAN-GO" id="Q66LE6">
    <property type="GO annotations" value="3 GO annotations based on evolutionary models"/>
</dbReference>
<dbReference type="PhylomeDB" id="Q66LE6"/>
<dbReference type="TreeFam" id="TF105553"/>
<dbReference type="PathwayCommons" id="Q66LE6"/>
<dbReference type="Reactome" id="R-HSA-2465910">
    <property type="pathway name" value="MASTL Facilitates Mitotic Progression"/>
</dbReference>
<dbReference type="SignaLink" id="Q66LE6"/>
<dbReference type="SIGNOR" id="Q66LE6"/>
<dbReference type="BioGRID-ORCS" id="55844">
    <property type="hits" value="3 hits in 257 CRISPR screens"/>
</dbReference>
<dbReference type="ChiTaRS" id="PPP2R2D">
    <property type="organism name" value="human"/>
</dbReference>
<dbReference type="GenomeRNAi" id="55844"/>
<dbReference type="Pharos" id="Q66LE6">
    <property type="development level" value="Tbio"/>
</dbReference>
<dbReference type="PRO" id="PR:Q66LE6"/>
<dbReference type="Proteomes" id="UP000005640">
    <property type="component" value="Chromosome 10"/>
</dbReference>
<dbReference type="RNAct" id="Q66LE6">
    <property type="molecule type" value="protein"/>
</dbReference>
<dbReference type="Bgee" id="ENSG00000175470">
    <property type="expression patterns" value="Expressed in body of pancreas and 175 other cell types or tissues"/>
</dbReference>
<dbReference type="ExpressionAtlas" id="Q66LE6">
    <property type="expression patterns" value="baseline and differential"/>
</dbReference>
<dbReference type="GO" id="GO:0005829">
    <property type="term" value="C:cytosol"/>
    <property type="evidence" value="ECO:0000318"/>
    <property type="project" value="GO_Central"/>
</dbReference>
<dbReference type="GO" id="GO:0000159">
    <property type="term" value="C:protein phosphatase type 2A complex"/>
    <property type="evidence" value="ECO:0000250"/>
    <property type="project" value="UniProtKB"/>
</dbReference>
<dbReference type="GO" id="GO:0140767">
    <property type="term" value="F:enzyme-substrate adaptor activity"/>
    <property type="evidence" value="ECO:0000250"/>
    <property type="project" value="UniProtKB"/>
</dbReference>
<dbReference type="GO" id="GO:0019888">
    <property type="term" value="F:protein phosphatase regulator activity"/>
    <property type="evidence" value="ECO:0000250"/>
    <property type="project" value="UniProtKB"/>
</dbReference>
<dbReference type="GO" id="GO:0051301">
    <property type="term" value="P:cell division"/>
    <property type="evidence" value="ECO:0007669"/>
    <property type="project" value="UniProtKB-KW"/>
</dbReference>
<dbReference type="GO" id="GO:0010458">
    <property type="term" value="P:exit from mitosis"/>
    <property type="evidence" value="ECO:0000250"/>
    <property type="project" value="UniProtKB"/>
</dbReference>
<dbReference type="GO" id="GO:0000278">
    <property type="term" value="P:mitotic cell cycle"/>
    <property type="evidence" value="ECO:0000250"/>
    <property type="project" value="UniProtKB"/>
</dbReference>
<dbReference type="GO" id="GO:0051983">
    <property type="term" value="P:regulation of chromosome segregation"/>
    <property type="evidence" value="ECO:0000250"/>
    <property type="project" value="UniProtKB"/>
</dbReference>
<dbReference type="FunFam" id="2.130.10.10:FF:000002">
    <property type="entry name" value="Serine/threonine-protein phosphatase 2A 55 kDa regulatory subunit B"/>
    <property type="match status" value="1"/>
</dbReference>
<dbReference type="Gene3D" id="2.130.10.10">
    <property type="entry name" value="YVTN repeat-like/Quinoprotein amine dehydrogenase"/>
    <property type="match status" value="1"/>
</dbReference>
<dbReference type="InterPro" id="IPR000009">
    <property type="entry name" value="PP2A_PR55"/>
</dbReference>
<dbReference type="InterPro" id="IPR018067">
    <property type="entry name" value="PP2A_PR55_CS"/>
</dbReference>
<dbReference type="InterPro" id="IPR015943">
    <property type="entry name" value="WD40/YVTN_repeat-like_dom_sf"/>
</dbReference>
<dbReference type="InterPro" id="IPR036322">
    <property type="entry name" value="WD40_repeat_dom_sf"/>
</dbReference>
<dbReference type="InterPro" id="IPR001680">
    <property type="entry name" value="WD40_rpt"/>
</dbReference>
<dbReference type="PANTHER" id="PTHR11871">
    <property type="entry name" value="PROTEIN PHOSPHATASE PP2A REGULATORY SUBUNIT B"/>
    <property type="match status" value="1"/>
</dbReference>
<dbReference type="PIRSF" id="PIRSF037309">
    <property type="entry name" value="PP2A_PR55"/>
    <property type="match status" value="1"/>
</dbReference>
<dbReference type="PRINTS" id="PR00600">
    <property type="entry name" value="PP2APR55"/>
</dbReference>
<dbReference type="SMART" id="SM00320">
    <property type="entry name" value="WD40"/>
    <property type="match status" value="7"/>
</dbReference>
<dbReference type="SUPFAM" id="SSF50978">
    <property type="entry name" value="WD40 repeat-like"/>
    <property type="match status" value="1"/>
</dbReference>
<dbReference type="PROSITE" id="PS01024">
    <property type="entry name" value="PR55_1"/>
    <property type="match status" value="1"/>
</dbReference>
<dbReference type="PROSITE" id="PS01025">
    <property type="entry name" value="PR55_2"/>
    <property type="match status" value="1"/>
</dbReference>
<comment type="function">
    <text evidence="4 5">Substrate-recognition subunit of protein phosphatase 2A (PP2A) that plays a key role in cell cycle by controlling mitosis entry and exit. Involved in chromosome clustering during late mitosis by mediating dephosphorylation of MKI67 (By similarity). The activity of PP2A complexes containing PPP2R2D (PR55-delta) fluctuate during the cell cycle: the activity is high in interphase and low in mitosis (By similarity).</text>
</comment>
<comment type="subunit">
    <text evidence="1 6">PP2A consists of a common heterodimeric core enzyme, composed of a 36 kDa catalytic subunit (subunit C) and a 65 kDa constant regulatory subunit (PR65 or subunit A), that associates with a variety of regulatory subunits. Proteins that associate with the core dimer include three families of regulatory subunits B (the R2/B/PR55/B55, R3/B''/PR72/PR130/PR59 and R5/B'/B56 families), the 48 kDa variable regulatory subunit, viral proteins, and cell signaling molecules. Interacts with ENSA (when phosphorylated at 'Ser-67') and ARPP19 (when phosphorylated at 'Ser-62'), leading to inhibit PP2A activity (By similarity). Interacts with IER5 (PubMed:25816751).</text>
</comment>
<comment type="interaction">
    <interactant intactId="EBI-717262">
        <id>Q66LE6</id>
    </interactant>
    <interactant intactId="EBI-14032793">
        <id>Q76S40</id>
        <label>ORF2</label>
    </interactant>
    <organismsDiffer>true</organismsDiffer>
    <experiments>2</experiments>
</comment>
<comment type="subcellular location">
    <subcellularLocation>
        <location evidence="3">Cytoplasm</location>
    </subcellularLocation>
</comment>
<comment type="similarity">
    <text evidence="7">Belongs to the phosphatase 2A regulatory subunit B family.</text>
</comment>
<comment type="sequence caution" evidence="7">
    <conflict type="erroneous initiation">
        <sequence resource="EMBL-CDS" id="BAA96065"/>
    </conflict>
</comment>
<accession>Q66LE6</accession>
<accession>A8KAK0</accession>
<accession>Q5SQJ2</accession>
<accession>Q9P1Y7</accession>
<protein>
    <recommendedName>
        <fullName>Serine/threonine-protein phosphatase 2A 55 kDa regulatory subunit B delta isoform</fullName>
    </recommendedName>
    <alternativeName>
        <fullName>PP2A subunit B isoform B55-delta</fullName>
    </alternativeName>
    <alternativeName>
        <fullName>PP2A subunit B isoform PR55-delta</fullName>
    </alternativeName>
    <alternativeName>
        <fullName>PP2A subunit B isoform R2-delta</fullName>
    </alternativeName>
    <alternativeName>
        <fullName>PP2A subunit B isoform delta</fullName>
    </alternativeName>
</protein>
<name>2ABD_HUMAN</name>